<gene>
    <name evidence="1" type="primary">gatA</name>
    <name type="ordered locus">Ccel_2436</name>
</gene>
<evidence type="ECO:0000255" key="1">
    <source>
        <dbReference type="HAMAP-Rule" id="MF_00120"/>
    </source>
</evidence>
<proteinExistence type="inferred from homology"/>
<sequence>MDITRLTIKEARKLLDNREISALELTRTYLDRINTLDGKVESYLSVTEDMALKQAEQAQNLIDYGKASLLTGIPLSIKDNICIEGTKTTCASKMLEDFVSPYTATAVDKLFADNAVILGKTNLDEFAMGGSTENSAFKITKNPFDLTRVPGGSSGGSAACVSASLALGSLGSDTGGSVRQPASFCGVVGMKPTYGLVSRYGLVAFASSFDQIGPIAKTVEDCAIILDSICGNDPKDATSLKYENDSSYSSSVSGDIKGFKFGLPKEYLTEGLNAEVKESLYKSIDKLESMGAKIEEFSMPVLKHAVPAYYLMSSAEASSNLSRYDGVKYGYRADNCKSFNELIGKSRAEGFGKEVKRRILLGTYSLASGYYDAYYKKALKLRTLISNGFNEAFTKYDVVLHPTTPETAFKIGQNSNSPLAMYLADIYTVAVNIAGLPSISLPCGYDSNGLPIGLSFTGKPLGEKDIFRAAASFEAEFSDKFRVPAI</sequence>
<accession>B8I601</accession>
<feature type="chain" id="PRO_1000122475" description="Glutamyl-tRNA(Gln) amidotransferase subunit A">
    <location>
        <begin position="1"/>
        <end position="486"/>
    </location>
</feature>
<feature type="active site" description="Charge relay system" evidence="1">
    <location>
        <position position="78"/>
    </location>
</feature>
<feature type="active site" description="Charge relay system" evidence="1">
    <location>
        <position position="153"/>
    </location>
</feature>
<feature type="active site" description="Acyl-ester intermediate" evidence="1">
    <location>
        <position position="177"/>
    </location>
</feature>
<dbReference type="EC" id="6.3.5.7" evidence="1"/>
<dbReference type="EMBL" id="CP001348">
    <property type="protein sequence ID" value="ACL76766.1"/>
    <property type="molecule type" value="Genomic_DNA"/>
</dbReference>
<dbReference type="RefSeq" id="WP_015925855.1">
    <property type="nucleotide sequence ID" value="NC_011898.1"/>
</dbReference>
<dbReference type="SMR" id="B8I601"/>
<dbReference type="STRING" id="394503.Ccel_2436"/>
<dbReference type="KEGG" id="cce:Ccel_2436"/>
<dbReference type="eggNOG" id="COG0154">
    <property type="taxonomic scope" value="Bacteria"/>
</dbReference>
<dbReference type="HOGENOM" id="CLU_009600_0_3_9"/>
<dbReference type="OrthoDB" id="9811471at2"/>
<dbReference type="Proteomes" id="UP000001349">
    <property type="component" value="Chromosome"/>
</dbReference>
<dbReference type="GO" id="GO:0030956">
    <property type="term" value="C:glutamyl-tRNA(Gln) amidotransferase complex"/>
    <property type="evidence" value="ECO:0007669"/>
    <property type="project" value="InterPro"/>
</dbReference>
<dbReference type="GO" id="GO:0005524">
    <property type="term" value="F:ATP binding"/>
    <property type="evidence" value="ECO:0007669"/>
    <property type="project" value="UniProtKB-KW"/>
</dbReference>
<dbReference type="GO" id="GO:0050567">
    <property type="term" value="F:glutaminyl-tRNA synthase (glutamine-hydrolyzing) activity"/>
    <property type="evidence" value="ECO:0007669"/>
    <property type="project" value="UniProtKB-UniRule"/>
</dbReference>
<dbReference type="GO" id="GO:0006412">
    <property type="term" value="P:translation"/>
    <property type="evidence" value="ECO:0007669"/>
    <property type="project" value="UniProtKB-UniRule"/>
</dbReference>
<dbReference type="Gene3D" id="3.90.1300.10">
    <property type="entry name" value="Amidase signature (AS) domain"/>
    <property type="match status" value="1"/>
</dbReference>
<dbReference type="HAMAP" id="MF_00120">
    <property type="entry name" value="GatA"/>
    <property type="match status" value="1"/>
</dbReference>
<dbReference type="InterPro" id="IPR000120">
    <property type="entry name" value="Amidase"/>
</dbReference>
<dbReference type="InterPro" id="IPR020556">
    <property type="entry name" value="Amidase_CS"/>
</dbReference>
<dbReference type="InterPro" id="IPR023631">
    <property type="entry name" value="Amidase_dom"/>
</dbReference>
<dbReference type="InterPro" id="IPR036928">
    <property type="entry name" value="AS_sf"/>
</dbReference>
<dbReference type="InterPro" id="IPR004412">
    <property type="entry name" value="GatA"/>
</dbReference>
<dbReference type="NCBIfam" id="TIGR00132">
    <property type="entry name" value="gatA"/>
    <property type="match status" value="1"/>
</dbReference>
<dbReference type="PANTHER" id="PTHR11895:SF151">
    <property type="entry name" value="GLUTAMYL-TRNA(GLN) AMIDOTRANSFERASE SUBUNIT A"/>
    <property type="match status" value="1"/>
</dbReference>
<dbReference type="PANTHER" id="PTHR11895">
    <property type="entry name" value="TRANSAMIDASE"/>
    <property type="match status" value="1"/>
</dbReference>
<dbReference type="Pfam" id="PF01425">
    <property type="entry name" value="Amidase"/>
    <property type="match status" value="1"/>
</dbReference>
<dbReference type="SUPFAM" id="SSF75304">
    <property type="entry name" value="Amidase signature (AS) enzymes"/>
    <property type="match status" value="1"/>
</dbReference>
<dbReference type="PROSITE" id="PS00571">
    <property type="entry name" value="AMIDASES"/>
    <property type="match status" value="1"/>
</dbReference>
<organism>
    <name type="scientific">Ruminiclostridium cellulolyticum (strain ATCC 35319 / DSM 5812 / JCM 6584 / H10)</name>
    <name type="common">Clostridium cellulolyticum</name>
    <dbReference type="NCBI Taxonomy" id="394503"/>
    <lineage>
        <taxon>Bacteria</taxon>
        <taxon>Bacillati</taxon>
        <taxon>Bacillota</taxon>
        <taxon>Clostridia</taxon>
        <taxon>Eubacteriales</taxon>
        <taxon>Oscillospiraceae</taxon>
        <taxon>Ruminiclostridium</taxon>
    </lineage>
</organism>
<name>GATA_RUMCH</name>
<comment type="function">
    <text evidence="1">Allows the formation of correctly charged Gln-tRNA(Gln) through the transamidation of misacylated Glu-tRNA(Gln) in organisms which lack glutaminyl-tRNA synthetase. The reaction takes place in the presence of glutamine and ATP through an activated gamma-phospho-Glu-tRNA(Gln).</text>
</comment>
<comment type="catalytic activity">
    <reaction evidence="1">
        <text>L-glutamyl-tRNA(Gln) + L-glutamine + ATP + H2O = L-glutaminyl-tRNA(Gln) + L-glutamate + ADP + phosphate + H(+)</text>
        <dbReference type="Rhea" id="RHEA:17521"/>
        <dbReference type="Rhea" id="RHEA-COMP:9681"/>
        <dbReference type="Rhea" id="RHEA-COMP:9684"/>
        <dbReference type="ChEBI" id="CHEBI:15377"/>
        <dbReference type="ChEBI" id="CHEBI:15378"/>
        <dbReference type="ChEBI" id="CHEBI:29985"/>
        <dbReference type="ChEBI" id="CHEBI:30616"/>
        <dbReference type="ChEBI" id="CHEBI:43474"/>
        <dbReference type="ChEBI" id="CHEBI:58359"/>
        <dbReference type="ChEBI" id="CHEBI:78520"/>
        <dbReference type="ChEBI" id="CHEBI:78521"/>
        <dbReference type="ChEBI" id="CHEBI:456216"/>
        <dbReference type="EC" id="6.3.5.7"/>
    </reaction>
</comment>
<comment type="subunit">
    <text evidence="1">Heterotrimer of A, B and C subunits.</text>
</comment>
<comment type="similarity">
    <text evidence="1">Belongs to the amidase family. GatA subfamily.</text>
</comment>
<protein>
    <recommendedName>
        <fullName evidence="1">Glutamyl-tRNA(Gln) amidotransferase subunit A</fullName>
        <shortName evidence="1">Glu-ADT subunit A</shortName>
        <ecNumber evidence="1">6.3.5.7</ecNumber>
    </recommendedName>
</protein>
<keyword id="KW-0067">ATP-binding</keyword>
<keyword id="KW-0436">Ligase</keyword>
<keyword id="KW-0547">Nucleotide-binding</keyword>
<keyword id="KW-0648">Protein biosynthesis</keyword>
<keyword id="KW-1185">Reference proteome</keyword>
<reference key="1">
    <citation type="submission" date="2009-01" db="EMBL/GenBank/DDBJ databases">
        <title>Complete sequence of Clostridium cellulolyticum H10.</title>
        <authorList>
            <consortium name="US DOE Joint Genome Institute"/>
            <person name="Lucas S."/>
            <person name="Copeland A."/>
            <person name="Lapidus A."/>
            <person name="Glavina del Rio T."/>
            <person name="Dalin E."/>
            <person name="Tice H."/>
            <person name="Bruce D."/>
            <person name="Goodwin L."/>
            <person name="Pitluck S."/>
            <person name="Chertkov O."/>
            <person name="Saunders E."/>
            <person name="Brettin T."/>
            <person name="Detter J.C."/>
            <person name="Han C."/>
            <person name="Larimer F."/>
            <person name="Land M."/>
            <person name="Hauser L."/>
            <person name="Kyrpides N."/>
            <person name="Ivanova N."/>
            <person name="Zhou J."/>
            <person name="Richardson P."/>
        </authorList>
    </citation>
    <scope>NUCLEOTIDE SEQUENCE [LARGE SCALE GENOMIC DNA]</scope>
    <source>
        <strain>ATCC 35319 / DSM 5812 / JCM 6584 / H10</strain>
    </source>
</reference>